<organism>
    <name type="scientific">Arabidopsis thaliana</name>
    <name type="common">Mouse-ear cress</name>
    <dbReference type="NCBI Taxonomy" id="3702"/>
    <lineage>
        <taxon>Eukaryota</taxon>
        <taxon>Viridiplantae</taxon>
        <taxon>Streptophyta</taxon>
        <taxon>Embryophyta</taxon>
        <taxon>Tracheophyta</taxon>
        <taxon>Spermatophyta</taxon>
        <taxon>Magnoliopsida</taxon>
        <taxon>eudicotyledons</taxon>
        <taxon>Gunneridae</taxon>
        <taxon>Pentapetalae</taxon>
        <taxon>rosids</taxon>
        <taxon>malvids</taxon>
        <taxon>Brassicales</taxon>
        <taxon>Brassicaceae</taxon>
        <taxon>Camelineae</taxon>
        <taxon>Arabidopsis</taxon>
    </lineage>
</organism>
<gene>
    <name type="primary">AOP3</name>
    <name type="ordered locus">At4g03050</name>
    <name type="ORF">T4I9.7</name>
</gene>
<accession>Q9ZTA1</accession>
<accession>F4JHY7</accession>
<accession>F4JHY8</accession>
<feature type="chain" id="PRO_0000423937" description="2-oxoglutarate-dependent dioxygenase AOP3">
    <location>
        <begin position="1"/>
        <end position="411"/>
    </location>
</feature>
<feature type="domain" description="Fe2OG dioxygenase" evidence="2">
    <location>
        <begin position="259"/>
        <end position="356"/>
    </location>
</feature>
<feature type="binding site" evidence="2">
    <location>
        <position position="279"/>
    </location>
    <ligand>
        <name>Fe cation</name>
        <dbReference type="ChEBI" id="CHEBI:24875"/>
    </ligand>
</feature>
<feature type="binding site" evidence="2">
    <location>
        <position position="281"/>
    </location>
    <ligand>
        <name>Fe cation</name>
        <dbReference type="ChEBI" id="CHEBI:24875"/>
    </ligand>
</feature>
<feature type="binding site" evidence="2">
    <location>
        <position position="336"/>
    </location>
    <ligand>
        <name>Fe cation</name>
        <dbReference type="ChEBI" id="CHEBI:24875"/>
    </ligand>
</feature>
<feature type="binding site" evidence="2">
    <location>
        <position position="347"/>
    </location>
    <ligand>
        <name>2-oxoglutarate</name>
        <dbReference type="ChEBI" id="CHEBI:16810"/>
    </ligand>
</feature>
<evidence type="ECO:0000250" key="1"/>
<evidence type="ECO:0000255" key="2">
    <source>
        <dbReference type="PROSITE-ProRule" id="PRU00805"/>
    </source>
</evidence>
<evidence type="ECO:0000305" key="3"/>
<evidence type="ECO:0000305" key="4">
    <source>
    </source>
</evidence>
<proteinExistence type="evidence at transcript level"/>
<sequence length="411" mass="44963">MGSCSPQLPLICLSDQTLKPGSSKWVKVRSDVRKALEDYGCFEAKIDQVSMELQGSVLKAMQELFALPTEAKQRNVCPKPFTGYLSHNGLSESFGIKDANILEKAHEFTQQLWPEGNKSISKMIQLYAEKLAELDMMVRRLILESYGIEYFIDEHLNSTYYRMRLMKYIARPDNDITAAVGANVDNGANDNADGDANVNDDGASIGVKVNVDVGDDVNDNDSVNIGVGVDINVETNVNGDLDAEANGDATAWVVGAVSGNASVGAKEANVDAELGLPSHTDKSLTGIIYQHQIDGLEVKTKEGKWIRVKPAPNTVIVIAGDALCALMNGRIPSPYHRVRVTEKKKTRYAAALFSNPKEGYIIDSPKELVDEKHPRAFKPFDFVDLFNFYHTEAGRRAPSTLQAFCGVSAGK</sequence>
<dbReference type="EC" id="1.14.11.-"/>
<dbReference type="EMBL" id="AF069442">
    <property type="protein sequence ID" value="AAC79100.1"/>
    <property type="molecule type" value="Genomic_DNA"/>
</dbReference>
<dbReference type="EMBL" id="AL161495">
    <property type="protein sequence ID" value="CAB77790.1"/>
    <property type="molecule type" value="Genomic_DNA"/>
</dbReference>
<dbReference type="EMBL" id="CP002687">
    <property type="protein sequence ID" value="AEE82265.2"/>
    <property type="molecule type" value="Genomic_DNA"/>
</dbReference>
<dbReference type="EMBL" id="CP002687">
    <property type="protein sequence ID" value="AEE82266.2"/>
    <property type="molecule type" value="Genomic_DNA"/>
</dbReference>
<dbReference type="PIR" id="T01388">
    <property type="entry name" value="T01388"/>
</dbReference>
<dbReference type="RefSeq" id="NP_001319854.1">
    <molecule id="Q9ZTA1-1"/>
    <property type="nucleotide sequence ID" value="NM_001340416.1"/>
</dbReference>
<dbReference type="RefSeq" id="NP_001319855.1">
    <molecule id="Q9ZTA1-1"/>
    <property type="nucleotide sequence ID" value="NM_001340417.1"/>
</dbReference>
<dbReference type="SMR" id="Q9ZTA1"/>
<dbReference type="FunCoup" id="Q9ZTA1">
    <property type="interactions" value="31"/>
</dbReference>
<dbReference type="STRING" id="3702.Q9ZTA1"/>
<dbReference type="PaxDb" id="3702-AT4G03050.2"/>
<dbReference type="ProteomicsDB" id="244993">
    <molecule id="Q9ZTA1-1"/>
</dbReference>
<dbReference type="EnsemblPlants" id="AT4G03050.1">
    <molecule id="Q9ZTA1-1"/>
    <property type="protein sequence ID" value="AT4G03050.1"/>
    <property type="gene ID" value="AT4G03050"/>
</dbReference>
<dbReference type="EnsemblPlants" id="AT4G03050.2">
    <molecule id="Q9ZTA1-1"/>
    <property type="protein sequence ID" value="AT4G03050.2"/>
    <property type="gene ID" value="AT4G03050"/>
</dbReference>
<dbReference type="GeneID" id="828104"/>
<dbReference type="Gramene" id="AT4G03050.1">
    <molecule id="Q9ZTA1-1"/>
    <property type="protein sequence ID" value="AT4G03050.1"/>
    <property type="gene ID" value="AT4G03050"/>
</dbReference>
<dbReference type="Gramene" id="AT4G03050.2">
    <molecule id="Q9ZTA1-1"/>
    <property type="protein sequence ID" value="AT4G03050.2"/>
    <property type="gene ID" value="AT4G03050"/>
</dbReference>
<dbReference type="KEGG" id="ath:AT4G03050"/>
<dbReference type="Araport" id="AT4G03050"/>
<dbReference type="TAIR" id="AT4G03050">
    <property type="gene designation" value="AOP3"/>
</dbReference>
<dbReference type="eggNOG" id="KOG0143">
    <property type="taxonomic scope" value="Eukaryota"/>
</dbReference>
<dbReference type="HOGENOM" id="CLU_010119_3_0_1"/>
<dbReference type="InParanoid" id="Q9ZTA1"/>
<dbReference type="OMA" id="KAHEFTQ"/>
<dbReference type="OrthoDB" id="288590at2759"/>
<dbReference type="PhylomeDB" id="Q9ZTA1"/>
<dbReference type="BioCyc" id="MetaCyc:AT4G03050-MONOMER"/>
<dbReference type="PRO" id="PR:Q9ZTA1"/>
<dbReference type="Proteomes" id="UP000006548">
    <property type="component" value="Chromosome 4"/>
</dbReference>
<dbReference type="ExpressionAtlas" id="Q9ZTA1">
    <property type="expression patterns" value="baseline and differential"/>
</dbReference>
<dbReference type="GO" id="GO:0016706">
    <property type="term" value="F:2-oxoglutarate-dependent dioxygenase activity"/>
    <property type="evidence" value="ECO:0000314"/>
    <property type="project" value="TAIR"/>
</dbReference>
<dbReference type="GO" id="GO:0046872">
    <property type="term" value="F:metal ion binding"/>
    <property type="evidence" value="ECO:0007669"/>
    <property type="project" value="UniProtKB-KW"/>
</dbReference>
<dbReference type="GO" id="GO:0019761">
    <property type="term" value="P:glucosinolate biosynthetic process"/>
    <property type="evidence" value="ECO:0000315"/>
    <property type="project" value="TAIR"/>
</dbReference>
<dbReference type="FunFam" id="2.60.120.330:FF:000061">
    <property type="entry name" value="2-oxoglutarate-dependent dioxygenase AOP3"/>
    <property type="match status" value="1"/>
</dbReference>
<dbReference type="FunFam" id="2.60.120.330:FF:000062">
    <property type="entry name" value="2-oxoglutarate-dependent dioxygenase AOP3"/>
    <property type="match status" value="1"/>
</dbReference>
<dbReference type="Gene3D" id="2.60.120.330">
    <property type="entry name" value="B-lactam Antibiotic, Isopenicillin N Synthase, Chain"/>
    <property type="match status" value="2"/>
</dbReference>
<dbReference type="InterPro" id="IPR026992">
    <property type="entry name" value="DIOX_N"/>
</dbReference>
<dbReference type="InterPro" id="IPR044861">
    <property type="entry name" value="IPNS-like_FE2OG_OXY"/>
</dbReference>
<dbReference type="InterPro" id="IPR027443">
    <property type="entry name" value="IPNS-like_sf"/>
</dbReference>
<dbReference type="InterPro" id="IPR050231">
    <property type="entry name" value="Iron_ascorbate_oxido_reductase"/>
</dbReference>
<dbReference type="InterPro" id="IPR005123">
    <property type="entry name" value="Oxoglu/Fe-dep_dioxygenase_dom"/>
</dbReference>
<dbReference type="PANTHER" id="PTHR47990">
    <property type="entry name" value="2-OXOGLUTARATE (2OG) AND FE(II)-DEPENDENT OXYGENASE SUPERFAMILY PROTEIN-RELATED"/>
    <property type="match status" value="1"/>
</dbReference>
<dbReference type="Pfam" id="PF03171">
    <property type="entry name" value="2OG-FeII_Oxy"/>
    <property type="match status" value="1"/>
</dbReference>
<dbReference type="Pfam" id="PF14226">
    <property type="entry name" value="DIOX_N"/>
    <property type="match status" value="1"/>
</dbReference>
<dbReference type="PRINTS" id="PR00682">
    <property type="entry name" value="IPNSYNTHASE"/>
</dbReference>
<dbReference type="SUPFAM" id="SSF51197">
    <property type="entry name" value="Clavaminate synthase-like"/>
    <property type="match status" value="1"/>
</dbReference>
<dbReference type="PROSITE" id="PS51471">
    <property type="entry name" value="FE2OG_OXY"/>
    <property type="match status" value="1"/>
</dbReference>
<comment type="function">
    <text evidence="1">2-oxoglutarate-dependent dioxygenase involved in glucosinolates biosynthesis. Catalyzes the conversion of methylsulfinylalkyl glucosinolates to hydroxyalkyl glucosinolates (By similarity).</text>
</comment>
<comment type="cofactor">
    <cofactor evidence="2">
        <name>Fe(2+)</name>
        <dbReference type="ChEBI" id="CHEBI:29033"/>
    </cofactor>
    <text evidence="2">Binds 1 Fe(2+) ion per subunit.</text>
</comment>
<comment type="alternative products">
    <event type="alternative splicing"/>
    <isoform>
        <id>Q9ZTA1-1</id>
        <name>1</name>
        <sequence type="displayed"/>
    </isoform>
    <text>A number of isoforms are produced. According to EST sequences.</text>
</comment>
<comment type="tissue specificity">
    <text>Not expressed.</text>
</comment>
<comment type="similarity">
    <text evidence="3">Belongs to the iron/ascorbate-dependent oxidoreductase family.</text>
</comment>
<comment type="caution">
    <text evidence="4">AOP1, AOP2 and AOP3 are found in tandem and inverted duplications on chromosome IV and encode 2-oxoglutarate-dependent dioxygenases involved in glucosinolates biosynthesis. In cv. Columbia, AOP2 (AC Q9ZTA2) cDNA contains a 5-bp deletion that leads to a non-functional protein and AOP3 (AC Q9ZTA1) is not expressed. The functional and expressed alleles for AOP2 (AC Q945B5) and AOP3 (AC Q945B4) are found in cv. Cvi and cv. Landsberg erecta, respectively. No ecotype coexpresses both AOP2 and AOP3 genes. The catalytic role of AOP1 is still uncertain (PubMed:11251105).</text>
</comment>
<name>AOP3C_ARATH</name>
<protein>
    <recommendedName>
        <fullName>2-oxoglutarate-dependent dioxygenase AOP3</fullName>
        <ecNumber>1.14.11.-</ecNumber>
    </recommendedName>
</protein>
<reference key="1">
    <citation type="journal article" date="1999" name="Nature">
        <title>Sequence and analysis of chromosome 4 of the plant Arabidopsis thaliana.</title>
        <authorList>
            <person name="Mayer K.F.X."/>
            <person name="Schueller C."/>
            <person name="Wambutt R."/>
            <person name="Murphy G."/>
            <person name="Volckaert G."/>
            <person name="Pohl T."/>
            <person name="Duesterhoeft A."/>
            <person name="Stiekema W."/>
            <person name="Entian K.-D."/>
            <person name="Terryn N."/>
            <person name="Harris B."/>
            <person name="Ansorge W."/>
            <person name="Brandt P."/>
            <person name="Grivell L.A."/>
            <person name="Rieger M."/>
            <person name="Weichselgartner M."/>
            <person name="de Simone V."/>
            <person name="Obermaier B."/>
            <person name="Mache R."/>
            <person name="Mueller M."/>
            <person name="Kreis M."/>
            <person name="Delseny M."/>
            <person name="Puigdomenech P."/>
            <person name="Watson M."/>
            <person name="Schmidtheini T."/>
            <person name="Reichert B."/>
            <person name="Portetelle D."/>
            <person name="Perez-Alonso M."/>
            <person name="Boutry M."/>
            <person name="Bancroft I."/>
            <person name="Vos P."/>
            <person name="Hoheisel J."/>
            <person name="Zimmermann W."/>
            <person name="Wedler H."/>
            <person name="Ridley P."/>
            <person name="Langham S.-A."/>
            <person name="McCullagh B."/>
            <person name="Bilham L."/>
            <person name="Robben J."/>
            <person name="van der Schueren J."/>
            <person name="Grymonprez B."/>
            <person name="Chuang Y.-J."/>
            <person name="Vandenbussche F."/>
            <person name="Braeken M."/>
            <person name="Weltjens I."/>
            <person name="Voet M."/>
            <person name="Bastiaens I."/>
            <person name="Aert R."/>
            <person name="Defoor E."/>
            <person name="Weitzenegger T."/>
            <person name="Bothe G."/>
            <person name="Ramsperger U."/>
            <person name="Hilbert H."/>
            <person name="Braun M."/>
            <person name="Holzer E."/>
            <person name="Brandt A."/>
            <person name="Peters S."/>
            <person name="van Staveren M."/>
            <person name="Dirkse W."/>
            <person name="Mooijman P."/>
            <person name="Klein Lankhorst R."/>
            <person name="Rose M."/>
            <person name="Hauf J."/>
            <person name="Koetter P."/>
            <person name="Berneiser S."/>
            <person name="Hempel S."/>
            <person name="Feldpausch M."/>
            <person name="Lamberth S."/>
            <person name="Van den Daele H."/>
            <person name="De Keyser A."/>
            <person name="Buysshaert C."/>
            <person name="Gielen J."/>
            <person name="Villarroel R."/>
            <person name="De Clercq R."/>
            <person name="van Montagu M."/>
            <person name="Rogers J."/>
            <person name="Cronin A."/>
            <person name="Quail M.A."/>
            <person name="Bray-Allen S."/>
            <person name="Clark L."/>
            <person name="Doggett J."/>
            <person name="Hall S."/>
            <person name="Kay M."/>
            <person name="Lennard N."/>
            <person name="McLay K."/>
            <person name="Mayes R."/>
            <person name="Pettett A."/>
            <person name="Rajandream M.A."/>
            <person name="Lyne M."/>
            <person name="Benes V."/>
            <person name="Rechmann S."/>
            <person name="Borkova D."/>
            <person name="Bloecker H."/>
            <person name="Scharfe M."/>
            <person name="Grimm M."/>
            <person name="Loehnert T.-H."/>
            <person name="Dose S."/>
            <person name="de Haan M."/>
            <person name="Maarse A.C."/>
            <person name="Schaefer M."/>
            <person name="Mueller-Auer S."/>
            <person name="Gabel C."/>
            <person name="Fuchs M."/>
            <person name="Fartmann B."/>
            <person name="Granderath K."/>
            <person name="Dauner D."/>
            <person name="Herzl A."/>
            <person name="Neumann S."/>
            <person name="Argiriou A."/>
            <person name="Vitale D."/>
            <person name="Liguori R."/>
            <person name="Piravandi E."/>
            <person name="Massenet O."/>
            <person name="Quigley F."/>
            <person name="Clabauld G."/>
            <person name="Muendlein A."/>
            <person name="Felber R."/>
            <person name="Schnabl S."/>
            <person name="Hiller R."/>
            <person name="Schmidt W."/>
            <person name="Lecharny A."/>
            <person name="Aubourg S."/>
            <person name="Chefdor F."/>
            <person name="Cooke R."/>
            <person name="Berger C."/>
            <person name="Monfort A."/>
            <person name="Casacuberta E."/>
            <person name="Gibbons T."/>
            <person name="Weber N."/>
            <person name="Vandenbol M."/>
            <person name="Bargues M."/>
            <person name="Terol J."/>
            <person name="Torres A."/>
            <person name="Perez-Perez A."/>
            <person name="Purnelle B."/>
            <person name="Bent E."/>
            <person name="Johnson S."/>
            <person name="Tacon D."/>
            <person name="Jesse T."/>
            <person name="Heijnen L."/>
            <person name="Schwarz S."/>
            <person name="Scholler P."/>
            <person name="Heber S."/>
            <person name="Francs P."/>
            <person name="Bielke C."/>
            <person name="Frishman D."/>
            <person name="Haase D."/>
            <person name="Lemcke K."/>
            <person name="Mewes H.-W."/>
            <person name="Stocker S."/>
            <person name="Zaccaria P."/>
            <person name="Bevan M."/>
            <person name="Wilson R.K."/>
            <person name="de la Bastide M."/>
            <person name="Habermann K."/>
            <person name="Parnell L."/>
            <person name="Dedhia N."/>
            <person name="Gnoj L."/>
            <person name="Schutz K."/>
            <person name="Huang E."/>
            <person name="Spiegel L."/>
            <person name="Sekhon M."/>
            <person name="Murray J."/>
            <person name="Sheet P."/>
            <person name="Cordes M."/>
            <person name="Abu-Threideh J."/>
            <person name="Stoneking T."/>
            <person name="Kalicki J."/>
            <person name="Graves T."/>
            <person name="Harmon G."/>
            <person name="Edwards J."/>
            <person name="Latreille P."/>
            <person name="Courtney L."/>
            <person name="Cloud J."/>
            <person name="Abbott A."/>
            <person name="Scott K."/>
            <person name="Johnson D."/>
            <person name="Minx P."/>
            <person name="Bentley D."/>
            <person name="Fulton B."/>
            <person name="Miller N."/>
            <person name="Greco T."/>
            <person name="Kemp K."/>
            <person name="Kramer J."/>
            <person name="Fulton L."/>
            <person name="Mardis E."/>
            <person name="Dante M."/>
            <person name="Pepin K."/>
            <person name="Hillier L.W."/>
            <person name="Nelson J."/>
            <person name="Spieth J."/>
            <person name="Ryan E."/>
            <person name="Andrews S."/>
            <person name="Geisel C."/>
            <person name="Layman D."/>
            <person name="Du H."/>
            <person name="Ali J."/>
            <person name="Berghoff A."/>
            <person name="Jones K."/>
            <person name="Drone K."/>
            <person name="Cotton M."/>
            <person name="Joshu C."/>
            <person name="Antonoiu B."/>
            <person name="Zidanic M."/>
            <person name="Strong C."/>
            <person name="Sun H."/>
            <person name="Lamar B."/>
            <person name="Yordan C."/>
            <person name="Ma P."/>
            <person name="Zhong J."/>
            <person name="Preston R."/>
            <person name="Vil D."/>
            <person name="Shekher M."/>
            <person name="Matero A."/>
            <person name="Shah R."/>
            <person name="Swaby I.K."/>
            <person name="O'Shaughnessy A."/>
            <person name="Rodriguez M."/>
            <person name="Hoffman J."/>
            <person name="Till S."/>
            <person name="Granat S."/>
            <person name="Shohdy N."/>
            <person name="Hasegawa A."/>
            <person name="Hameed A."/>
            <person name="Lodhi M."/>
            <person name="Johnson A."/>
            <person name="Chen E."/>
            <person name="Marra M.A."/>
            <person name="Martienssen R."/>
            <person name="McCombie W.R."/>
        </authorList>
    </citation>
    <scope>NUCLEOTIDE SEQUENCE [LARGE SCALE GENOMIC DNA]</scope>
    <source>
        <strain>cv. Columbia</strain>
    </source>
</reference>
<reference key="2">
    <citation type="journal article" date="2017" name="Plant J.">
        <title>Araport11: a complete reannotation of the Arabidopsis thaliana reference genome.</title>
        <authorList>
            <person name="Cheng C.Y."/>
            <person name="Krishnakumar V."/>
            <person name="Chan A.P."/>
            <person name="Thibaud-Nissen F."/>
            <person name="Schobel S."/>
            <person name="Town C.D."/>
        </authorList>
    </citation>
    <scope>GENOME REANNOTATION</scope>
    <source>
        <strain>cv. Columbia</strain>
    </source>
</reference>
<reference key="3">
    <citation type="journal article" date="2001" name="Plant Cell">
        <title>Gene duplication in the diversification of secondary metabolism: tandem 2-oxoglutarate-dependent dioxygenases control glucosinolate biosynthesis in Arabidopsis.</title>
        <authorList>
            <person name="Kliebenstein D.J."/>
            <person name="Lambrix V.M."/>
            <person name="Reichelt M."/>
            <person name="Gershenzon J."/>
            <person name="Mitchell-Olds T."/>
        </authorList>
    </citation>
    <scope>GENE FAMILY</scope>
    <scope>LACK OF TISSUE SPECIFICITY</scope>
</reference>
<keyword id="KW-0025">Alternative splicing</keyword>
<keyword id="KW-0223">Dioxygenase</keyword>
<keyword id="KW-0408">Iron</keyword>
<keyword id="KW-0479">Metal-binding</keyword>
<keyword id="KW-0560">Oxidoreductase</keyword>
<keyword id="KW-1185">Reference proteome</keyword>